<name>RL10_RHOPT</name>
<reference key="1">
    <citation type="submission" date="2008-05" db="EMBL/GenBank/DDBJ databases">
        <title>Complete sequence of Rhodopseudomonas palustris TIE-1.</title>
        <authorList>
            <consortium name="US DOE Joint Genome Institute"/>
            <person name="Lucas S."/>
            <person name="Copeland A."/>
            <person name="Lapidus A."/>
            <person name="Glavina del Rio T."/>
            <person name="Dalin E."/>
            <person name="Tice H."/>
            <person name="Pitluck S."/>
            <person name="Chain P."/>
            <person name="Malfatti S."/>
            <person name="Shin M."/>
            <person name="Vergez L."/>
            <person name="Lang D."/>
            <person name="Schmutz J."/>
            <person name="Larimer F."/>
            <person name="Land M."/>
            <person name="Hauser L."/>
            <person name="Kyrpides N."/>
            <person name="Mikhailova N."/>
            <person name="Emerson D."/>
            <person name="Newman D.K."/>
            <person name="Roden E."/>
            <person name="Richardson P."/>
        </authorList>
    </citation>
    <scope>NUCLEOTIDE SEQUENCE [LARGE SCALE GENOMIC DNA]</scope>
    <source>
        <strain>TIE-1</strain>
    </source>
</reference>
<sequence length="172" mass="17707">MERAAKKEAVESLNGLFQTTSVAIVAHYSGLTVAQMQKLRQQMKQAGASVKVSKNRLAKIALEGTDVAAIGPLLKGPTVIATSSDPVAAPKVAVEFAKANEKFVILGGSMGTTVLNVDGVKALASLPSLDELRAKLVGLVQAPATKIAQVTTAPAAKLARVVQAYASKSEAA</sequence>
<evidence type="ECO:0000255" key="1">
    <source>
        <dbReference type="HAMAP-Rule" id="MF_00362"/>
    </source>
</evidence>
<evidence type="ECO:0000305" key="2"/>
<gene>
    <name evidence="1" type="primary">rplJ</name>
    <name type="ordered locus">Rpal_3689</name>
</gene>
<comment type="function">
    <text evidence="1">Forms part of the ribosomal stalk, playing a central role in the interaction of the ribosome with GTP-bound translation factors.</text>
</comment>
<comment type="subunit">
    <text evidence="1">Part of the ribosomal stalk of the 50S ribosomal subunit. The N-terminus interacts with L11 and the large rRNA to form the base of the stalk. The C-terminus forms an elongated spine to which L12 dimers bind in a sequential fashion forming a multimeric L10(L12)X complex.</text>
</comment>
<comment type="similarity">
    <text evidence="1">Belongs to the universal ribosomal protein uL10 family.</text>
</comment>
<proteinExistence type="inferred from homology"/>
<organism>
    <name type="scientific">Rhodopseudomonas palustris (strain TIE-1)</name>
    <dbReference type="NCBI Taxonomy" id="395960"/>
    <lineage>
        <taxon>Bacteria</taxon>
        <taxon>Pseudomonadati</taxon>
        <taxon>Pseudomonadota</taxon>
        <taxon>Alphaproteobacteria</taxon>
        <taxon>Hyphomicrobiales</taxon>
        <taxon>Nitrobacteraceae</taxon>
        <taxon>Rhodopseudomonas</taxon>
    </lineage>
</organism>
<protein>
    <recommendedName>
        <fullName evidence="1">Large ribosomal subunit protein uL10</fullName>
    </recommendedName>
    <alternativeName>
        <fullName evidence="2">50S ribosomal protein L10</fullName>
    </alternativeName>
</protein>
<dbReference type="EMBL" id="CP001096">
    <property type="protein sequence ID" value="ACF02189.1"/>
    <property type="molecule type" value="Genomic_DNA"/>
</dbReference>
<dbReference type="RefSeq" id="WP_011158813.1">
    <property type="nucleotide sequence ID" value="NC_011004.1"/>
</dbReference>
<dbReference type="SMR" id="B3QC02"/>
<dbReference type="GeneID" id="66894356"/>
<dbReference type="KEGG" id="rpt:Rpal_3689"/>
<dbReference type="HOGENOM" id="CLU_092227_0_0_5"/>
<dbReference type="OrthoDB" id="9791972at2"/>
<dbReference type="Proteomes" id="UP000001725">
    <property type="component" value="Chromosome"/>
</dbReference>
<dbReference type="GO" id="GO:0015934">
    <property type="term" value="C:large ribosomal subunit"/>
    <property type="evidence" value="ECO:0007669"/>
    <property type="project" value="InterPro"/>
</dbReference>
<dbReference type="GO" id="GO:0070180">
    <property type="term" value="F:large ribosomal subunit rRNA binding"/>
    <property type="evidence" value="ECO:0007669"/>
    <property type="project" value="UniProtKB-UniRule"/>
</dbReference>
<dbReference type="GO" id="GO:0003735">
    <property type="term" value="F:structural constituent of ribosome"/>
    <property type="evidence" value="ECO:0007669"/>
    <property type="project" value="InterPro"/>
</dbReference>
<dbReference type="GO" id="GO:0006412">
    <property type="term" value="P:translation"/>
    <property type="evidence" value="ECO:0007669"/>
    <property type="project" value="UniProtKB-UniRule"/>
</dbReference>
<dbReference type="CDD" id="cd05797">
    <property type="entry name" value="Ribosomal_L10"/>
    <property type="match status" value="1"/>
</dbReference>
<dbReference type="Gene3D" id="3.30.70.1730">
    <property type="match status" value="1"/>
</dbReference>
<dbReference type="Gene3D" id="6.10.250.290">
    <property type="match status" value="1"/>
</dbReference>
<dbReference type="HAMAP" id="MF_00362">
    <property type="entry name" value="Ribosomal_uL10"/>
    <property type="match status" value="1"/>
</dbReference>
<dbReference type="InterPro" id="IPR001790">
    <property type="entry name" value="Ribosomal_uL10"/>
</dbReference>
<dbReference type="InterPro" id="IPR043141">
    <property type="entry name" value="Ribosomal_uL10-like_sf"/>
</dbReference>
<dbReference type="InterPro" id="IPR022973">
    <property type="entry name" value="Ribosomal_uL10_bac"/>
</dbReference>
<dbReference type="InterPro" id="IPR047865">
    <property type="entry name" value="Ribosomal_uL10_bac_type"/>
</dbReference>
<dbReference type="InterPro" id="IPR002363">
    <property type="entry name" value="Ribosomal_uL10_CS_bac"/>
</dbReference>
<dbReference type="NCBIfam" id="NF000955">
    <property type="entry name" value="PRK00099.1-1"/>
    <property type="match status" value="1"/>
</dbReference>
<dbReference type="PANTHER" id="PTHR11560">
    <property type="entry name" value="39S RIBOSOMAL PROTEIN L10, MITOCHONDRIAL"/>
    <property type="match status" value="1"/>
</dbReference>
<dbReference type="Pfam" id="PF00466">
    <property type="entry name" value="Ribosomal_L10"/>
    <property type="match status" value="1"/>
</dbReference>
<dbReference type="SUPFAM" id="SSF160369">
    <property type="entry name" value="Ribosomal protein L10-like"/>
    <property type="match status" value="1"/>
</dbReference>
<dbReference type="PROSITE" id="PS01109">
    <property type="entry name" value="RIBOSOMAL_L10"/>
    <property type="match status" value="1"/>
</dbReference>
<feature type="chain" id="PRO_1000121005" description="Large ribosomal subunit protein uL10">
    <location>
        <begin position="1"/>
        <end position="172"/>
    </location>
</feature>
<keyword id="KW-0687">Ribonucleoprotein</keyword>
<keyword id="KW-0689">Ribosomal protein</keyword>
<keyword id="KW-0694">RNA-binding</keyword>
<keyword id="KW-0699">rRNA-binding</keyword>
<accession>B3QC02</accession>